<organism>
    <name type="scientific">Eremothecium gossypii (strain ATCC 10895 / CBS 109.51 / FGSC 9923 / NRRL Y-1056)</name>
    <name type="common">Yeast</name>
    <name type="synonym">Ashbya gossypii</name>
    <dbReference type="NCBI Taxonomy" id="284811"/>
    <lineage>
        <taxon>Eukaryota</taxon>
        <taxon>Fungi</taxon>
        <taxon>Dikarya</taxon>
        <taxon>Ascomycota</taxon>
        <taxon>Saccharomycotina</taxon>
        <taxon>Saccharomycetes</taxon>
        <taxon>Saccharomycetales</taxon>
        <taxon>Saccharomycetaceae</taxon>
        <taxon>Eremothecium</taxon>
    </lineage>
</organism>
<evidence type="ECO:0000250" key="1"/>
<evidence type="ECO:0000305" key="2"/>
<feature type="chain" id="PRO_0000076347" description="SWR1-complex protein 7">
    <location>
        <begin position="1"/>
        <end position="127"/>
    </location>
</feature>
<dbReference type="EMBL" id="AE016818">
    <property type="protein sequence ID" value="AAS52732.1"/>
    <property type="molecule type" value="Genomic_DNA"/>
</dbReference>
<dbReference type="RefSeq" id="NP_984908.1">
    <property type="nucleotide sequence ID" value="NM_210262.1"/>
</dbReference>
<dbReference type="FunCoup" id="Q757G5">
    <property type="interactions" value="75"/>
</dbReference>
<dbReference type="STRING" id="284811.Q757G5"/>
<dbReference type="EnsemblFungi" id="AAS52732">
    <property type="protein sequence ID" value="AAS52732"/>
    <property type="gene ID" value="AGOS_AER048C"/>
</dbReference>
<dbReference type="GeneID" id="4621110"/>
<dbReference type="KEGG" id="ago:AGOS_AER048C"/>
<dbReference type="eggNOG" id="ENOG502S4GP">
    <property type="taxonomic scope" value="Eukaryota"/>
</dbReference>
<dbReference type="HOGENOM" id="CLU_157410_0_0_1"/>
<dbReference type="InParanoid" id="Q757G5"/>
<dbReference type="OMA" id="TLANHYY"/>
<dbReference type="OrthoDB" id="4067990at2759"/>
<dbReference type="Proteomes" id="UP000000591">
    <property type="component" value="Chromosome V"/>
</dbReference>
<dbReference type="GO" id="GO:0000812">
    <property type="term" value="C:Swr1 complex"/>
    <property type="evidence" value="ECO:0007669"/>
    <property type="project" value="EnsemblFungi"/>
</dbReference>
<dbReference type="GO" id="GO:0006338">
    <property type="term" value="P:chromatin remodeling"/>
    <property type="evidence" value="ECO:0007669"/>
    <property type="project" value="EnsemblFungi"/>
</dbReference>
<dbReference type="InterPro" id="IPR020195">
    <property type="entry name" value="SWR1_Swc7"/>
</dbReference>
<dbReference type="Pfam" id="PF17330">
    <property type="entry name" value="SWC7"/>
    <property type="match status" value="1"/>
</dbReference>
<protein>
    <recommendedName>
        <fullName>SWR1-complex protein 7</fullName>
    </recommendedName>
</protein>
<proteinExistence type="inferred from homology"/>
<keyword id="KW-0010">Activator</keyword>
<keyword id="KW-0156">Chromatin regulator</keyword>
<keyword id="KW-0539">Nucleus</keyword>
<keyword id="KW-1185">Reference proteome</keyword>
<keyword id="KW-0804">Transcription</keyword>
<keyword id="KW-0805">Transcription regulation</keyword>
<accession>Q757G5</accession>
<name>SWC7_EREGS</name>
<gene>
    <name type="primary">SWC7</name>
    <name type="ordered locus">AER048C</name>
</gene>
<sequence>MEYKYNVTLLLLQVVLHRQQELAHQDKTLSQISLLREPVVDTAVLERFSAHRVVRLYAPELCGLRLEELQAVVREVFARGLAGSAEDTPVTLITLANHYYRLRVQELELQELPKLKELMESAAGLRT</sequence>
<comment type="function">
    <text evidence="1">Component of the SWR1 complex which mediates the ATP-dependent exchange of histone H2A for the H2A variant HZT1 leading to transcriptional regulation of selected genes by chromatin remodeling.</text>
</comment>
<comment type="subunit">
    <text evidence="1">Component of the SWR1 chromatin remodeling complex.</text>
</comment>
<comment type="subcellular location">
    <subcellularLocation>
        <location evidence="1">Nucleus</location>
    </subcellularLocation>
</comment>
<comment type="similarity">
    <text evidence="2">Belongs to the SWC7 family.</text>
</comment>
<reference key="1">
    <citation type="journal article" date="2004" name="Science">
        <title>The Ashbya gossypii genome as a tool for mapping the ancient Saccharomyces cerevisiae genome.</title>
        <authorList>
            <person name="Dietrich F.S."/>
            <person name="Voegeli S."/>
            <person name="Brachat S."/>
            <person name="Lerch A."/>
            <person name="Gates K."/>
            <person name="Steiner S."/>
            <person name="Mohr C."/>
            <person name="Poehlmann R."/>
            <person name="Luedi P."/>
            <person name="Choi S."/>
            <person name="Wing R.A."/>
            <person name="Flavier A."/>
            <person name="Gaffney T.D."/>
            <person name="Philippsen P."/>
        </authorList>
    </citation>
    <scope>NUCLEOTIDE SEQUENCE [LARGE SCALE GENOMIC DNA]</scope>
    <source>
        <strain>ATCC 10895 / CBS 109.51 / FGSC 9923 / NRRL Y-1056</strain>
    </source>
</reference>
<reference key="2">
    <citation type="journal article" date="2013" name="G3 (Bethesda)">
        <title>Genomes of Ashbya fungi isolated from insects reveal four mating-type loci, numerous translocations, lack of transposons, and distinct gene duplications.</title>
        <authorList>
            <person name="Dietrich F.S."/>
            <person name="Voegeli S."/>
            <person name="Kuo S."/>
            <person name="Philippsen P."/>
        </authorList>
    </citation>
    <scope>GENOME REANNOTATION</scope>
    <source>
        <strain>ATCC 10895 / CBS 109.51 / FGSC 9923 / NRRL Y-1056</strain>
    </source>
</reference>